<keyword id="KW-0687">Ribonucleoprotein</keyword>
<keyword id="KW-0689">Ribosomal protein</keyword>
<keyword id="KW-0694">RNA-binding</keyword>
<keyword id="KW-0699">rRNA-binding</keyword>
<reference key="1">
    <citation type="journal article" date="2008" name="Chem. Biol. Interact.">
        <title>Extending the Bacillus cereus group genomics to putative food-borne pathogens of different toxicity.</title>
        <authorList>
            <person name="Lapidus A."/>
            <person name="Goltsman E."/>
            <person name="Auger S."/>
            <person name="Galleron N."/>
            <person name="Segurens B."/>
            <person name="Dossat C."/>
            <person name="Land M.L."/>
            <person name="Broussolle V."/>
            <person name="Brillard J."/>
            <person name="Guinebretiere M.-H."/>
            <person name="Sanchis V."/>
            <person name="Nguen-the C."/>
            <person name="Lereclus D."/>
            <person name="Richardson P."/>
            <person name="Wincker P."/>
            <person name="Weissenbach J."/>
            <person name="Ehrlich S.D."/>
            <person name="Sorokin A."/>
        </authorList>
    </citation>
    <scope>NUCLEOTIDE SEQUENCE [LARGE SCALE GENOMIC DNA]</scope>
    <source>
        <strain>DSM 22905 / CIP 110041 / 391-98 / NVH 391-98</strain>
    </source>
</reference>
<protein>
    <recommendedName>
        <fullName evidence="1">Small ribosomal subunit protein bS6</fullName>
    </recommendedName>
    <alternativeName>
        <fullName evidence="2">30S ribosomal protein S6</fullName>
    </alternativeName>
</protein>
<dbReference type="EMBL" id="CP000764">
    <property type="protein sequence ID" value="ABS24195.1"/>
    <property type="molecule type" value="Genomic_DNA"/>
</dbReference>
<dbReference type="RefSeq" id="WP_012096457.1">
    <property type="nucleotide sequence ID" value="NC_009674.1"/>
</dbReference>
<dbReference type="SMR" id="A7GVN7"/>
<dbReference type="STRING" id="315749.Bcer98_4014"/>
<dbReference type="GeneID" id="33899244"/>
<dbReference type="KEGG" id="bcy:Bcer98_4014"/>
<dbReference type="eggNOG" id="COG0360">
    <property type="taxonomic scope" value="Bacteria"/>
</dbReference>
<dbReference type="HOGENOM" id="CLU_113441_5_3_9"/>
<dbReference type="OrthoDB" id="9812702at2"/>
<dbReference type="Proteomes" id="UP000002300">
    <property type="component" value="Chromosome"/>
</dbReference>
<dbReference type="GO" id="GO:0005737">
    <property type="term" value="C:cytoplasm"/>
    <property type="evidence" value="ECO:0007669"/>
    <property type="project" value="UniProtKB-ARBA"/>
</dbReference>
<dbReference type="GO" id="GO:1990904">
    <property type="term" value="C:ribonucleoprotein complex"/>
    <property type="evidence" value="ECO:0007669"/>
    <property type="project" value="UniProtKB-KW"/>
</dbReference>
<dbReference type="GO" id="GO:0005840">
    <property type="term" value="C:ribosome"/>
    <property type="evidence" value="ECO:0007669"/>
    <property type="project" value="UniProtKB-KW"/>
</dbReference>
<dbReference type="GO" id="GO:0070181">
    <property type="term" value="F:small ribosomal subunit rRNA binding"/>
    <property type="evidence" value="ECO:0007669"/>
    <property type="project" value="TreeGrafter"/>
</dbReference>
<dbReference type="GO" id="GO:0003735">
    <property type="term" value="F:structural constituent of ribosome"/>
    <property type="evidence" value="ECO:0007669"/>
    <property type="project" value="InterPro"/>
</dbReference>
<dbReference type="GO" id="GO:0006412">
    <property type="term" value="P:translation"/>
    <property type="evidence" value="ECO:0007669"/>
    <property type="project" value="UniProtKB-UniRule"/>
</dbReference>
<dbReference type="CDD" id="cd00473">
    <property type="entry name" value="bS6"/>
    <property type="match status" value="1"/>
</dbReference>
<dbReference type="FunFam" id="3.30.70.60:FF:000002">
    <property type="entry name" value="30S ribosomal protein S6"/>
    <property type="match status" value="1"/>
</dbReference>
<dbReference type="Gene3D" id="3.30.70.60">
    <property type="match status" value="1"/>
</dbReference>
<dbReference type="HAMAP" id="MF_00360">
    <property type="entry name" value="Ribosomal_bS6"/>
    <property type="match status" value="1"/>
</dbReference>
<dbReference type="InterPro" id="IPR000529">
    <property type="entry name" value="Ribosomal_bS6"/>
</dbReference>
<dbReference type="InterPro" id="IPR020815">
    <property type="entry name" value="Ribosomal_bS6_CS"/>
</dbReference>
<dbReference type="InterPro" id="IPR035980">
    <property type="entry name" value="Ribosomal_bS6_sf"/>
</dbReference>
<dbReference type="InterPro" id="IPR020814">
    <property type="entry name" value="Ribosomal_S6_plastid/chlpt"/>
</dbReference>
<dbReference type="InterPro" id="IPR014717">
    <property type="entry name" value="Transl_elong_EF1B/ribsomal_bS6"/>
</dbReference>
<dbReference type="NCBIfam" id="TIGR00166">
    <property type="entry name" value="S6"/>
    <property type="match status" value="1"/>
</dbReference>
<dbReference type="PANTHER" id="PTHR21011">
    <property type="entry name" value="MITOCHONDRIAL 28S RIBOSOMAL PROTEIN S6"/>
    <property type="match status" value="1"/>
</dbReference>
<dbReference type="PANTHER" id="PTHR21011:SF1">
    <property type="entry name" value="SMALL RIBOSOMAL SUBUNIT PROTEIN BS6M"/>
    <property type="match status" value="1"/>
</dbReference>
<dbReference type="Pfam" id="PF01250">
    <property type="entry name" value="Ribosomal_S6"/>
    <property type="match status" value="1"/>
</dbReference>
<dbReference type="SUPFAM" id="SSF54995">
    <property type="entry name" value="Ribosomal protein S6"/>
    <property type="match status" value="1"/>
</dbReference>
<dbReference type="PROSITE" id="PS01048">
    <property type="entry name" value="RIBOSOMAL_S6"/>
    <property type="match status" value="1"/>
</dbReference>
<proteinExistence type="inferred from homology"/>
<comment type="function">
    <text evidence="1">Binds together with bS18 to 16S ribosomal RNA.</text>
</comment>
<comment type="similarity">
    <text evidence="1">Belongs to the bacterial ribosomal protein bS6 family.</text>
</comment>
<accession>A7GVN7</accession>
<name>RS6_BACCN</name>
<gene>
    <name evidence="1" type="primary">rpsF</name>
    <name type="ordered locus">Bcer98_4014</name>
</gene>
<feature type="chain" id="PRO_1000079432" description="Small ribosomal subunit protein bS6">
    <location>
        <begin position="1"/>
        <end position="95"/>
    </location>
</feature>
<sequence length="95" mass="11287">MKKYEIMYIIRPNMEEEAQKALVERFANVLTNNGAEIINTKEWGKRRLAYEINDLRDGFYMILNVNSNPEAVKEFDRLAKINEDIIRHIVVKEEE</sequence>
<organism>
    <name type="scientific">Bacillus cytotoxicus (strain DSM 22905 / CIP 110041 / 391-98 / NVH 391-98)</name>
    <dbReference type="NCBI Taxonomy" id="315749"/>
    <lineage>
        <taxon>Bacteria</taxon>
        <taxon>Bacillati</taxon>
        <taxon>Bacillota</taxon>
        <taxon>Bacilli</taxon>
        <taxon>Bacillales</taxon>
        <taxon>Bacillaceae</taxon>
        <taxon>Bacillus</taxon>
        <taxon>Bacillus cereus group</taxon>
    </lineage>
</organism>
<evidence type="ECO:0000255" key="1">
    <source>
        <dbReference type="HAMAP-Rule" id="MF_00360"/>
    </source>
</evidence>
<evidence type="ECO:0000305" key="2"/>